<keyword id="KW-0488">Methylation</keyword>
<keyword id="KW-1185">Reference proteome</keyword>
<keyword id="KW-0687">Ribonucleoprotein</keyword>
<keyword id="KW-0689">Ribosomal protein</keyword>
<keyword id="KW-0694">RNA-binding</keyword>
<keyword id="KW-0699">rRNA-binding</keyword>
<keyword id="KW-0820">tRNA-binding</keyword>
<proteinExistence type="inferred from homology"/>
<reference key="1">
    <citation type="submission" date="2007-07" db="EMBL/GenBank/DDBJ databases">
        <title>Complete sequence of chromosome of Xanthobacter autotrophicus Py2.</title>
        <authorList>
            <consortium name="US DOE Joint Genome Institute"/>
            <person name="Copeland A."/>
            <person name="Lucas S."/>
            <person name="Lapidus A."/>
            <person name="Barry K."/>
            <person name="Glavina del Rio T."/>
            <person name="Hammon N."/>
            <person name="Israni S."/>
            <person name="Dalin E."/>
            <person name="Tice H."/>
            <person name="Pitluck S."/>
            <person name="Sims D."/>
            <person name="Brettin T."/>
            <person name="Bruce D."/>
            <person name="Detter J.C."/>
            <person name="Han C."/>
            <person name="Tapia R."/>
            <person name="Brainard J."/>
            <person name="Schmutz J."/>
            <person name="Larimer F."/>
            <person name="Land M."/>
            <person name="Hauser L."/>
            <person name="Kyrpides N."/>
            <person name="Kim E."/>
            <person name="Ensigns S.A."/>
            <person name="Richardson P."/>
        </authorList>
    </citation>
    <scope>NUCLEOTIDE SEQUENCE [LARGE SCALE GENOMIC DNA]</scope>
    <source>
        <strain>ATCC BAA-1158 / Py2</strain>
    </source>
</reference>
<dbReference type="EMBL" id="CP000781">
    <property type="protein sequence ID" value="ABS66919.1"/>
    <property type="molecule type" value="Genomic_DNA"/>
</dbReference>
<dbReference type="SMR" id="A7IFX6"/>
<dbReference type="STRING" id="78245.Xaut_1674"/>
<dbReference type="KEGG" id="xau:Xaut_1674"/>
<dbReference type="eggNOG" id="COG0048">
    <property type="taxonomic scope" value="Bacteria"/>
</dbReference>
<dbReference type="HOGENOM" id="CLU_104295_1_2_5"/>
<dbReference type="OrthoDB" id="9802366at2"/>
<dbReference type="PhylomeDB" id="A7IFX6"/>
<dbReference type="Proteomes" id="UP000002417">
    <property type="component" value="Chromosome"/>
</dbReference>
<dbReference type="GO" id="GO:0015935">
    <property type="term" value="C:small ribosomal subunit"/>
    <property type="evidence" value="ECO:0007669"/>
    <property type="project" value="InterPro"/>
</dbReference>
<dbReference type="GO" id="GO:0019843">
    <property type="term" value="F:rRNA binding"/>
    <property type="evidence" value="ECO:0007669"/>
    <property type="project" value="UniProtKB-UniRule"/>
</dbReference>
<dbReference type="GO" id="GO:0003735">
    <property type="term" value="F:structural constituent of ribosome"/>
    <property type="evidence" value="ECO:0007669"/>
    <property type="project" value="InterPro"/>
</dbReference>
<dbReference type="GO" id="GO:0000049">
    <property type="term" value="F:tRNA binding"/>
    <property type="evidence" value="ECO:0007669"/>
    <property type="project" value="UniProtKB-UniRule"/>
</dbReference>
<dbReference type="GO" id="GO:0006412">
    <property type="term" value="P:translation"/>
    <property type="evidence" value="ECO:0007669"/>
    <property type="project" value="UniProtKB-UniRule"/>
</dbReference>
<dbReference type="CDD" id="cd03368">
    <property type="entry name" value="Ribosomal_S12"/>
    <property type="match status" value="1"/>
</dbReference>
<dbReference type="FunFam" id="2.40.50.140:FF:000001">
    <property type="entry name" value="30S ribosomal protein S12"/>
    <property type="match status" value="1"/>
</dbReference>
<dbReference type="Gene3D" id="2.40.50.140">
    <property type="entry name" value="Nucleic acid-binding proteins"/>
    <property type="match status" value="1"/>
</dbReference>
<dbReference type="HAMAP" id="MF_00403_B">
    <property type="entry name" value="Ribosomal_uS12_B"/>
    <property type="match status" value="1"/>
</dbReference>
<dbReference type="InterPro" id="IPR012340">
    <property type="entry name" value="NA-bd_OB-fold"/>
</dbReference>
<dbReference type="InterPro" id="IPR006032">
    <property type="entry name" value="Ribosomal_uS12"/>
</dbReference>
<dbReference type="InterPro" id="IPR005679">
    <property type="entry name" value="Ribosomal_uS12_bac"/>
</dbReference>
<dbReference type="NCBIfam" id="TIGR00981">
    <property type="entry name" value="rpsL_bact"/>
    <property type="match status" value="1"/>
</dbReference>
<dbReference type="PANTHER" id="PTHR11652">
    <property type="entry name" value="30S RIBOSOMAL PROTEIN S12 FAMILY MEMBER"/>
    <property type="match status" value="1"/>
</dbReference>
<dbReference type="Pfam" id="PF00164">
    <property type="entry name" value="Ribosom_S12_S23"/>
    <property type="match status" value="1"/>
</dbReference>
<dbReference type="PIRSF" id="PIRSF002133">
    <property type="entry name" value="Ribosomal_S12/S23"/>
    <property type="match status" value="1"/>
</dbReference>
<dbReference type="PRINTS" id="PR01034">
    <property type="entry name" value="RIBOSOMALS12"/>
</dbReference>
<dbReference type="SUPFAM" id="SSF50249">
    <property type="entry name" value="Nucleic acid-binding proteins"/>
    <property type="match status" value="1"/>
</dbReference>
<dbReference type="PROSITE" id="PS00055">
    <property type="entry name" value="RIBOSOMAL_S12"/>
    <property type="match status" value="1"/>
</dbReference>
<feature type="chain" id="PRO_1000123539" description="Small ribosomal subunit protein uS12">
    <location>
        <begin position="1"/>
        <end position="123"/>
    </location>
</feature>
<feature type="region of interest" description="Disordered" evidence="3">
    <location>
        <begin position="1"/>
        <end position="31"/>
    </location>
</feature>
<feature type="compositionally biased region" description="Basic and acidic residues" evidence="3">
    <location>
        <begin position="10"/>
        <end position="21"/>
    </location>
</feature>
<feature type="modified residue" description="3-methylthioaspartic acid" evidence="1">
    <location>
        <position position="89"/>
    </location>
</feature>
<organism>
    <name type="scientific">Xanthobacter autotrophicus (strain ATCC BAA-1158 / Py2)</name>
    <dbReference type="NCBI Taxonomy" id="78245"/>
    <lineage>
        <taxon>Bacteria</taxon>
        <taxon>Pseudomonadati</taxon>
        <taxon>Pseudomonadota</taxon>
        <taxon>Alphaproteobacteria</taxon>
        <taxon>Hyphomicrobiales</taxon>
        <taxon>Xanthobacteraceae</taxon>
        <taxon>Xanthobacter</taxon>
    </lineage>
</organism>
<gene>
    <name evidence="2" type="primary">rpsL</name>
    <name type="ordered locus">Xaut_1674</name>
</gene>
<accession>A7IFX6</accession>
<sequence length="123" mass="13908">MPTINQLIRKPREAQKARDKAPALQASPQKRGVCTRVYTTTPKKPNSALRKVAKVRLTNSYEVIGYIPGEGHNLQEHSVVMIRGGRVKDLPGVRYHILRGVLDTQGVKNRKQRRSKYGAKRPK</sequence>
<protein>
    <recommendedName>
        <fullName evidence="2">Small ribosomal subunit protein uS12</fullName>
    </recommendedName>
    <alternativeName>
        <fullName evidence="4">30S ribosomal protein S12</fullName>
    </alternativeName>
</protein>
<name>RS12_XANP2</name>
<comment type="function">
    <text evidence="2">With S4 and S5 plays an important role in translational accuracy.</text>
</comment>
<comment type="function">
    <text evidence="2">Interacts with and stabilizes bases of the 16S rRNA that are involved in tRNA selection in the A site and with the mRNA backbone. Located at the interface of the 30S and 50S subunits, it traverses the body of the 30S subunit contacting proteins on the other side and probably holding the rRNA structure together. The combined cluster of proteins S8, S12 and S17 appears to hold together the shoulder and platform of the 30S subunit.</text>
</comment>
<comment type="subunit">
    <text evidence="2">Part of the 30S ribosomal subunit. Contacts proteins S8 and S17. May interact with IF1 in the 30S initiation complex.</text>
</comment>
<comment type="similarity">
    <text evidence="2">Belongs to the universal ribosomal protein uS12 family.</text>
</comment>
<evidence type="ECO:0000250" key="1"/>
<evidence type="ECO:0000255" key="2">
    <source>
        <dbReference type="HAMAP-Rule" id="MF_00403"/>
    </source>
</evidence>
<evidence type="ECO:0000256" key="3">
    <source>
        <dbReference type="SAM" id="MobiDB-lite"/>
    </source>
</evidence>
<evidence type="ECO:0000305" key="4"/>